<organism>
    <name type="scientific">Leishmania donovani</name>
    <dbReference type="NCBI Taxonomy" id="5661"/>
    <lineage>
        <taxon>Eukaryota</taxon>
        <taxon>Discoba</taxon>
        <taxon>Euglenozoa</taxon>
        <taxon>Kinetoplastea</taxon>
        <taxon>Metakinetoplastina</taxon>
        <taxon>Trypanosomatida</taxon>
        <taxon>Trypanosomatidae</taxon>
        <taxon>Leishmaniinae</taxon>
        <taxon>Leishmania</taxon>
    </lineage>
</organism>
<reference key="1">
    <citation type="submission" date="1994-10" db="EMBL/GenBank/DDBJ databases">
        <title>Characterisation and expression of a G-alpha protein gene from Leishmania donovani.</title>
        <authorList>
            <person name="Heath S."/>
            <person name="Warbrick V.E."/>
            <person name="Procter J."/>
        </authorList>
    </citation>
    <scope>NUCLEOTIDE SEQUENCE [MRNA]</scope>
</reference>
<reference key="2">
    <citation type="unpublished observations" date="1996-03">
        <authorList>
            <person name="Bucher P."/>
        </authorList>
    </citation>
    <scope>DOUBTS ON INTEGRITY OF SEQUENCE</scope>
</reference>
<feature type="chain" id="PRO_0000203667" description="Putative guanine nucleotide-binding protein subunit alpha">
    <location>
        <begin position="1"/>
        <end position="464"/>
    </location>
</feature>
<feature type="domain" description="G-alpha" evidence="2">
    <location>
        <begin position="33"/>
        <end position="415"/>
    </location>
</feature>
<feature type="region of interest" description="G1 motif" evidence="2">
    <location>
        <begin position="36"/>
        <end position="49"/>
    </location>
</feature>
<feature type="region of interest" description="G2 motif" evidence="2">
    <location>
        <begin position="212"/>
        <end position="220"/>
    </location>
</feature>
<feature type="region of interest" description="G3 motif" evidence="2">
    <location>
        <begin position="235"/>
        <end position="244"/>
    </location>
</feature>
<feature type="region of interest" description="G4 motif" evidence="2">
    <location>
        <begin position="306"/>
        <end position="313"/>
    </location>
</feature>
<feature type="region of interest" description="G5 motif" evidence="2">
    <location>
        <begin position="382"/>
        <end position="387"/>
    </location>
</feature>
<feature type="binding site" evidence="1">
    <location>
        <begin position="41"/>
        <end position="48"/>
    </location>
    <ligand>
        <name>GTP</name>
        <dbReference type="ChEBI" id="CHEBI:37565"/>
    </ligand>
</feature>
<feature type="binding site" evidence="1">
    <location>
        <position position="48"/>
    </location>
    <ligand>
        <name>Mg(2+)</name>
        <dbReference type="ChEBI" id="CHEBI:18420"/>
    </ligand>
</feature>
<feature type="binding site" evidence="1">
    <location>
        <begin position="147"/>
        <end position="151"/>
    </location>
    <ligand>
        <name>GTP</name>
        <dbReference type="ChEBI" id="CHEBI:37565"/>
    </ligand>
</feature>
<feature type="binding site" evidence="1">
    <location>
        <begin position="214"/>
        <end position="220"/>
    </location>
    <ligand>
        <name>GTP</name>
        <dbReference type="ChEBI" id="CHEBI:37565"/>
    </ligand>
</feature>
<feature type="binding site" evidence="1">
    <location>
        <position position="220"/>
    </location>
    <ligand>
        <name>Mg(2+)</name>
        <dbReference type="ChEBI" id="CHEBI:18420"/>
    </ligand>
</feature>
<feature type="binding site" evidence="1">
    <location>
        <begin position="239"/>
        <end position="243"/>
    </location>
    <ligand>
        <name>GTP</name>
        <dbReference type="ChEBI" id="CHEBI:37565"/>
    </ligand>
</feature>
<feature type="binding site" evidence="1">
    <location>
        <begin position="268"/>
        <end position="271"/>
    </location>
    <ligand>
        <name>GTP</name>
        <dbReference type="ChEBI" id="CHEBI:37565"/>
    </ligand>
</feature>
<feature type="binding site" evidence="1">
    <location>
        <begin position="310"/>
        <end position="313"/>
    </location>
    <ligand>
        <name>GTP</name>
        <dbReference type="ChEBI" id="CHEBI:37565"/>
    </ligand>
</feature>
<name>GPA_LEIDO</name>
<protein>
    <recommendedName>
        <fullName>Putative guanine nucleotide-binding protein subunit alpha</fullName>
    </recommendedName>
</protein>
<comment type="function">
    <text>Guanine nucleotide-binding proteins (G proteins) are involved as modulators or transducers in various transmembrane signaling systems.</text>
</comment>
<comment type="subunit">
    <text>G proteins are composed of 3 units; alpha, beta and gamma. The alpha chain contains the guanine nucleotide binding site.</text>
</comment>
<comment type="similarity">
    <text evidence="3">In the N-terminal section; belongs to the G-alpha family.</text>
</comment>
<comment type="similarity">
    <text evidence="3">In the C-terminal section; belongs to the class-II aminoacyl-tRNA synthetase family.</text>
</comment>
<comment type="sequence caution" evidence="3">
    <conflict type="miscellaneous discrepancy" ref="2"/>
    <text>According to Ref.2, this sequence seems to be a hybrid that consists of parts of a G protein alpha subunit and a lysyl-tRNA synthetase.</text>
</comment>
<proteinExistence type="evidence at transcript level"/>
<evidence type="ECO:0000250" key="1"/>
<evidence type="ECO:0000255" key="2">
    <source>
        <dbReference type="PROSITE-ProRule" id="PRU01230"/>
    </source>
</evidence>
<evidence type="ECO:0000305" key="3"/>
<accession>P43151</accession>
<dbReference type="EMBL" id="L36832">
    <property type="protein sequence ID" value="AAA50285.1"/>
    <property type="molecule type" value="mRNA"/>
</dbReference>
<dbReference type="VEuPathDB" id="TriTrypDB:LdBPK_150270.1"/>
<dbReference type="VEuPathDB" id="TriTrypDB:LdCL_150007600"/>
<dbReference type="VEuPathDB" id="TriTrypDB:LDHU3_15.0360"/>
<dbReference type="GO" id="GO:0005829">
    <property type="term" value="C:cytosol"/>
    <property type="evidence" value="ECO:0007669"/>
    <property type="project" value="TreeGrafter"/>
</dbReference>
<dbReference type="GO" id="GO:0005524">
    <property type="term" value="F:ATP binding"/>
    <property type="evidence" value="ECO:0007669"/>
    <property type="project" value="InterPro"/>
</dbReference>
<dbReference type="GO" id="GO:0031683">
    <property type="term" value="F:G-protein beta/gamma-subunit complex binding"/>
    <property type="evidence" value="ECO:0007669"/>
    <property type="project" value="InterPro"/>
</dbReference>
<dbReference type="GO" id="GO:0005525">
    <property type="term" value="F:GTP binding"/>
    <property type="evidence" value="ECO:0007669"/>
    <property type="project" value="UniProtKB-KW"/>
</dbReference>
<dbReference type="GO" id="GO:0003924">
    <property type="term" value="F:GTPase activity"/>
    <property type="evidence" value="ECO:0007669"/>
    <property type="project" value="InterPro"/>
</dbReference>
<dbReference type="GO" id="GO:0004824">
    <property type="term" value="F:lysine-tRNA ligase activity"/>
    <property type="evidence" value="ECO:0007669"/>
    <property type="project" value="TreeGrafter"/>
</dbReference>
<dbReference type="GO" id="GO:0046872">
    <property type="term" value="F:metal ion binding"/>
    <property type="evidence" value="ECO:0007669"/>
    <property type="project" value="UniProtKB-KW"/>
</dbReference>
<dbReference type="GO" id="GO:0000049">
    <property type="term" value="F:tRNA binding"/>
    <property type="evidence" value="ECO:0007669"/>
    <property type="project" value="TreeGrafter"/>
</dbReference>
<dbReference type="GO" id="GO:0007186">
    <property type="term" value="P:G protein-coupled receptor signaling pathway"/>
    <property type="evidence" value="ECO:0007669"/>
    <property type="project" value="InterPro"/>
</dbReference>
<dbReference type="GO" id="GO:0006430">
    <property type="term" value="P:lysyl-tRNA aminoacylation"/>
    <property type="evidence" value="ECO:0007669"/>
    <property type="project" value="TreeGrafter"/>
</dbReference>
<dbReference type="CDD" id="cd00066">
    <property type="entry name" value="G-alpha"/>
    <property type="match status" value="1"/>
</dbReference>
<dbReference type="Gene3D" id="3.30.930.10">
    <property type="entry name" value="Bira Bifunctional Protein, Domain 2"/>
    <property type="match status" value="1"/>
</dbReference>
<dbReference type="Gene3D" id="1.10.400.10">
    <property type="entry name" value="GI Alpha 1, domain 2-like"/>
    <property type="match status" value="1"/>
</dbReference>
<dbReference type="Gene3D" id="2.40.50.140">
    <property type="entry name" value="Nucleic acid-binding proteins"/>
    <property type="match status" value="1"/>
</dbReference>
<dbReference type="InterPro" id="IPR004364">
    <property type="entry name" value="Aa-tRNA-synt_II"/>
</dbReference>
<dbReference type="InterPro" id="IPR006195">
    <property type="entry name" value="aa-tRNA-synth_II"/>
</dbReference>
<dbReference type="InterPro" id="IPR045864">
    <property type="entry name" value="aa-tRNA-synth_II/BPL/LPL"/>
</dbReference>
<dbReference type="InterPro" id="IPR001019">
    <property type="entry name" value="Gprotein_alpha_su"/>
</dbReference>
<dbReference type="InterPro" id="IPR011025">
    <property type="entry name" value="GproteinA_insert"/>
</dbReference>
<dbReference type="InterPro" id="IPR012340">
    <property type="entry name" value="NA-bd_OB-fold"/>
</dbReference>
<dbReference type="InterPro" id="IPR027417">
    <property type="entry name" value="P-loop_NTPase"/>
</dbReference>
<dbReference type="PANTHER" id="PTHR42918:SF9">
    <property type="entry name" value="LYSINE--TRNA LIGASE"/>
    <property type="match status" value="1"/>
</dbReference>
<dbReference type="PANTHER" id="PTHR42918">
    <property type="entry name" value="LYSYL-TRNA SYNTHETASE"/>
    <property type="match status" value="1"/>
</dbReference>
<dbReference type="Pfam" id="PF00503">
    <property type="entry name" value="G-alpha"/>
    <property type="match status" value="1"/>
</dbReference>
<dbReference type="Pfam" id="PF00152">
    <property type="entry name" value="tRNA-synt_2"/>
    <property type="match status" value="1"/>
</dbReference>
<dbReference type="PRINTS" id="PR00318">
    <property type="entry name" value="GPROTEINA"/>
</dbReference>
<dbReference type="SMART" id="SM00275">
    <property type="entry name" value="G_alpha"/>
    <property type="match status" value="1"/>
</dbReference>
<dbReference type="SUPFAM" id="SSF55681">
    <property type="entry name" value="Class II aaRS and biotin synthetases"/>
    <property type="match status" value="1"/>
</dbReference>
<dbReference type="SUPFAM" id="SSF52540">
    <property type="entry name" value="P-loop containing nucleoside triphosphate hydrolases"/>
    <property type="match status" value="1"/>
</dbReference>
<dbReference type="SUPFAM" id="SSF47895">
    <property type="entry name" value="Transducin (alpha subunit), insertion domain"/>
    <property type="match status" value="1"/>
</dbReference>
<dbReference type="PROSITE" id="PS50862">
    <property type="entry name" value="AA_TRNA_LIGASE_II"/>
    <property type="match status" value="1"/>
</dbReference>
<dbReference type="PROSITE" id="PS51882">
    <property type="entry name" value="G_ALPHA"/>
    <property type="match status" value="1"/>
</dbReference>
<sequence>MSRSTHASGHMETVQVISALTDYIDQSKFAEIHSKLKRGDGPGESGKSTIFQIIGIAGRPSLSKSSEFSLKATEITLLSTCYHMLPDDYFGLLPLSSASVNATSTLLSTATISRPSFSVQTSSSTFANFLMSGTSWRSRRQRLKIVDVGGQRSQRRKLTAELAQDIKALWADPGIQNTFQRSSEFQLNDSAAYYFDSIDRISQPLYLPSENDVLRSRTKTTGIIETVFEIQNSTFRMVDVGGQRELANAHTELNNPIVQREEFVKQLRNRDKGDDESMEIDEGFVAALEHALPPTGGWGLGIDRLVMFLTSQSNIKEVLLFPAMKPEGKNAISYPPGTRCSMVRVFPCCSSTLTFSFCFFFSPFFMTVILFVEAAAMKVRGGYSGTCLSVSPRFSNGGDVLWRTSETKRDKYNEKRHAAVKTPAQRSFLESGWNTASDVKCCSIRRFPYLPLPLSSSPFRFPPP</sequence>
<keyword id="KW-0342">GTP-binding</keyword>
<keyword id="KW-0460">Magnesium</keyword>
<keyword id="KW-0479">Metal-binding</keyword>
<keyword id="KW-0547">Nucleotide-binding</keyword>
<keyword id="KW-0807">Transducer</keyword>